<protein>
    <recommendedName>
        <fullName>Putative F-box protein At3g22421</fullName>
    </recommendedName>
</protein>
<reference key="1">
    <citation type="journal article" date="2000" name="DNA Res.">
        <title>Structural analysis of Arabidopsis thaliana chromosome 3. I. Sequence features of the regions of 4,504,864 bp covered by sixty P1 and TAC clones.</title>
        <authorList>
            <person name="Sato S."/>
            <person name="Nakamura Y."/>
            <person name="Kaneko T."/>
            <person name="Katoh T."/>
            <person name="Asamizu E."/>
            <person name="Tabata S."/>
        </authorList>
    </citation>
    <scope>NUCLEOTIDE SEQUENCE [LARGE SCALE GENOMIC DNA]</scope>
    <source>
        <strain>cv. Columbia</strain>
    </source>
</reference>
<reference key="2">
    <citation type="journal article" date="2017" name="Plant J.">
        <title>Araport11: a complete reannotation of the Arabidopsis thaliana reference genome.</title>
        <authorList>
            <person name="Cheng C.Y."/>
            <person name="Krishnakumar V."/>
            <person name="Chan A.P."/>
            <person name="Thibaud-Nissen F."/>
            <person name="Schobel S."/>
            <person name="Town C.D."/>
        </authorList>
    </citation>
    <scope>GENOME REANNOTATION</scope>
    <source>
        <strain>cv. Columbia</strain>
    </source>
</reference>
<name>FB175_ARATH</name>
<gene>
    <name type="ordered locus">At3g22421</name>
    <name type="ORF">MCB17.16</name>
</gene>
<keyword id="KW-1185">Reference proteome</keyword>
<proteinExistence type="predicted"/>
<sequence length="428" mass="50008">MTMTTTISHLPTELLDEIISRVPLKSTRAVRLTCKNWDSLFKNRSFMKEEAAAKEGESRMIVLMDKNLFAMSIFFNGIDIDPSAEQRGKLTCLYDDSEQVKISQVFHCEGLLLCVLEDDKCSLVVWNPYWGQTRWIEPRYFSRIQNCYGRYMYVYALGYNNKSRSHKILRFIDGAFDFPFWYEIYDFDSDLWTTLDVTPQWFINFPPRGCYNRGVTLKGNTYWCAIRRKSNTNWFVDLDHIICFDFTSERFGPLMPLPFVRYTSGSLVTLSCVREEKLAVLFCNNATVEVWITTKIETDKISWSKFLTVNMYVDLLEGSFFIDEVKKVAMIFDIPMNRETVYIVGEAGNVKELHLGQPVDVDKHFSPLFVCSYVPSLVQIKQPPGCQRKQESSLEKRRCDDENISRLIAHEETYVVYGRYVPSRKKPR</sequence>
<evidence type="ECO:0000255" key="1">
    <source>
        <dbReference type="PROSITE-ProRule" id="PRU00080"/>
    </source>
</evidence>
<feature type="chain" id="PRO_0000283445" description="Putative F-box protein At3g22421">
    <location>
        <begin position="1"/>
        <end position="428"/>
    </location>
</feature>
<feature type="domain" description="F-box" evidence="1">
    <location>
        <begin position="4"/>
        <end position="50"/>
    </location>
</feature>
<dbReference type="EMBL" id="AB022215">
    <property type="protein sequence ID" value="BAB01780.1"/>
    <property type="molecule type" value="Genomic_DNA"/>
</dbReference>
<dbReference type="EMBL" id="CP002686">
    <property type="protein sequence ID" value="AEE76635.2"/>
    <property type="molecule type" value="Genomic_DNA"/>
</dbReference>
<dbReference type="RefSeq" id="NP_683583.2">
    <property type="nucleotide sequence ID" value="NM_148741.2"/>
</dbReference>
<dbReference type="STRING" id="3702.Q9LUV7"/>
<dbReference type="PaxDb" id="3702-AT3G22421.1"/>
<dbReference type="EnsemblPlants" id="AT3G22421.1">
    <property type="protein sequence ID" value="AT3G22421.1"/>
    <property type="gene ID" value="AT3G22421"/>
</dbReference>
<dbReference type="GeneID" id="821811"/>
<dbReference type="Gramene" id="AT3G22421.1">
    <property type="protein sequence ID" value="AT3G22421.1"/>
    <property type="gene ID" value="AT3G22421"/>
</dbReference>
<dbReference type="KEGG" id="ath:AT3G22421"/>
<dbReference type="Araport" id="AT3G22421"/>
<dbReference type="TAIR" id="AT3G22421"/>
<dbReference type="HOGENOM" id="CLU_034692_0_0_1"/>
<dbReference type="InParanoid" id="Q9LUV7"/>
<dbReference type="OMA" id="YWCAIRR"/>
<dbReference type="PhylomeDB" id="Q9LUV7"/>
<dbReference type="BioCyc" id="ARA:AT3G22421-MONOMER"/>
<dbReference type="PRO" id="PR:Q9LUV7"/>
<dbReference type="Proteomes" id="UP000006548">
    <property type="component" value="Chromosome 3"/>
</dbReference>
<dbReference type="ExpressionAtlas" id="Q9LUV7">
    <property type="expression patterns" value="baseline and differential"/>
</dbReference>
<dbReference type="Gene3D" id="1.20.1280.50">
    <property type="match status" value="1"/>
</dbReference>
<dbReference type="InterPro" id="IPR006527">
    <property type="entry name" value="F-box-assoc_dom_typ1"/>
</dbReference>
<dbReference type="InterPro" id="IPR017451">
    <property type="entry name" value="F-box-assoc_interact_dom"/>
</dbReference>
<dbReference type="InterPro" id="IPR036047">
    <property type="entry name" value="F-box-like_dom_sf"/>
</dbReference>
<dbReference type="InterPro" id="IPR001810">
    <property type="entry name" value="F-box_dom"/>
</dbReference>
<dbReference type="InterPro" id="IPR011043">
    <property type="entry name" value="Gal_Oxase/kelch_b-propeller"/>
</dbReference>
<dbReference type="InterPro" id="IPR050796">
    <property type="entry name" value="SCF_F-box_component"/>
</dbReference>
<dbReference type="NCBIfam" id="TIGR01640">
    <property type="entry name" value="F_box_assoc_1"/>
    <property type="match status" value="1"/>
</dbReference>
<dbReference type="PANTHER" id="PTHR31672">
    <property type="entry name" value="BNACNNG10540D PROTEIN"/>
    <property type="match status" value="1"/>
</dbReference>
<dbReference type="PANTHER" id="PTHR31672:SF13">
    <property type="entry name" value="F-BOX PROTEIN CPR30-LIKE"/>
    <property type="match status" value="1"/>
</dbReference>
<dbReference type="Pfam" id="PF00646">
    <property type="entry name" value="F-box"/>
    <property type="match status" value="1"/>
</dbReference>
<dbReference type="Pfam" id="PF07734">
    <property type="entry name" value="FBA_1"/>
    <property type="match status" value="1"/>
</dbReference>
<dbReference type="SMART" id="SM00256">
    <property type="entry name" value="FBOX"/>
    <property type="match status" value="1"/>
</dbReference>
<dbReference type="SUPFAM" id="SSF81383">
    <property type="entry name" value="F-box domain"/>
    <property type="match status" value="1"/>
</dbReference>
<dbReference type="SUPFAM" id="SSF50965">
    <property type="entry name" value="Galactose oxidase, central domain"/>
    <property type="match status" value="1"/>
</dbReference>
<dbReference type="PROSITE" id="PS50181">
    <property type="entry name" value="FBOX"/>
    <property type="match status" value="1"/>
</dbReference>
<accession>Q9LUV7</accession>
<accession>F4J096</accession>
<organism>
    <name type="scientific">Arabidopsis thaliana</name>
    <name type="common">Mouse-ear cress</name>
    <dbReference type="NCBI Taxonomy" id="3702"/>
    <lineage>
        <taxon>Eukaryota</taxon>
        <taxon>Viridiplantae</taxon>
        <taxon>Streptophyta</taxon>
        <taxon>Embryophyta</taxon>
        <taxon>Tracheophyta</taxon>
        <taxon>Spermatophyta</taxon>
        <taxon>Magnoliopsida</taxon>
        <taxon>eudicotyledons</taxon>
        <taxon>Gunneridae</taxon>
        <taxon>Pentapetalae</taxon>
        <taxon>rosids</taxon>
        <taxon>malvids</taxon>
        <taxon>Brassicales</taxon>
        <taxon>Brassicaceae</taxon>
        <taxon>Camelineae</taxon>
        <taxon>Arabidopsis</taxon>
    </lineage>
</organism>